<keyword id="KW-1185">Reference proteome</keyword>
<keyword id="KW-0687">Ribonucleoprotein</keyword>
<keyword id="KW-0689">Ribosomal protein</keyword>
<sequence>MAKYQKLGRDSSARKALFRAVVTALFDKERIETTEAKAKAVQSIAEEMITLAKRGDLHARRQALAYIYDESVVTKLFNQIAPRYADRNGGYTRVIRTGVRKGDAAPMAILELV</sequence>
<protein>
    <recommendedName>
        <fullName evidence="1">Large ribosomal subunit protein bL17</fullName>
    </recommendedName>
    <alternativeName>
        <fullName evidence="2">50S ribosomal protein L17</fullName>
    </alternativeName>
</protein>
<dbReference type="EMBL" id="AP006840">
    <property type="protein sequence ID" value="BAD42028.1"/>
    <property type="molecule type" value="Genomic_DNA"/>
</dbReference>
<dbReference type="RefSeq" id="WP_011197161.1">
    <property type="nucleotide sequence ID" value="NC_006177.1"/>
</dbReference>
<dbReference type="SMR" id="Q67JX2"/>
<dbReference type="STRING" id="292459.STH3046"/>
<dbReference type="KEGG" id="sth:STH3046"/>
<dbReference type="eggNOG" id="COG0203">
    <property type="taxonomic scope" value="Bacteria"/>
</dbReference>
<dbReference type="HOGENOM" id="CLU_074407_2_2_9"/>
<dbReference type="OrthoDB" id="9809073at2"/>
<dbReference type="Proteomes" id="UP000000417">
    <property type="component" value="Chromosome"/>
</dbReference>
<dbReference type="GO" id="GO:0022625">
    <property type="term" value="C:cytosolic large ribosomal subunit"/>
    <property type="evidence" value="ECO:0007669"/>
    <property type="project" value="TreeGrafter"/>
</dbReference>
<dbReference type="GO" id="GO:0003735">
    <property type="term" value="F:structural constituent of ribosome"/>
    <property type="evidence" value="ECO:0007669"/>
    <property type="project" value="InterPro"/>
</dbReference>
<dbReference type="GO" id="GO:0006412">
    <property type="term" value="P:translation"/>
    <property type="evidence" value="ECO:0007669"/>
    <property type="project" value="UniProtKB-UniRule"/>
</dbReference>
<dbReference type="FunFam" id="3.90.1030.10:FF:000001">
    <property type="entry name" value="50S ribosomal protein L17"/>
    <property type="match status" value="1"/>
</dbReference>
<dbReference type="Gene3D" id="3.90.1030.10">
    <property type="entry name" value="Ribosomal protein L17"/>
    <property type="match status" value="1"/>
</dbReference>
<dbReference type="HAMAP" id="MF_01368">
    <property type="entry name" value="Ribosomal_bL17"/>
    <property type="match status" value="1"/>
</dbReference>
<dbReference type="InterPro" id="IPR000456">
    <property type="entry name" value="Ribosomal_bL17"/>
</dbReference>
<dbReference type="InterPro" id="IPR047859">
    <property type="entry name" value="Ribosomal_bL17_CS"/>
</dbReference>
<dbReference type="InterPro" id="IPR036373">
    <property type="entry name" value="Ribosomal_bL17_sf"/>
</dbReference>
<dbReference type="NCBIfam" id="TIGR00059">
    <property type="entry name" value="L17"/>
    <property type="match status" value="1"/>
</dbReference>
<dbReference type="PANTHER" id="PTHR14413:SF16">
    <property type="entry name" value="LARGE RIBOSOMAL SUBUNIT PROTEIN BL17M"/>
    <property type="match status" value="1"/>
</dbReference>
<dbReference type="PANTHER" id="PTHR14413">
    <property type="entry name" value="RIBOSOMAL PROTEIN L17"/>
    <property type="match status" value="1"/>
</dbReference>
<dbReference type="Pfam" id="PF01196">
    <property type="entry name" value="Ribosomal_L17"/>
    <property type="match status" value="1"/>
</dbReference>
<dbReference type="SUPFAM" id="SSF64263">
    <property type="entry name" value="Prokaryotic ribosomal protein L17"/>
    <property type="match status" value="1"/>
</dbReference>
<dbReference type="PROSITE" id="PS01167">
    <property type="entry name" value="RIBOSOMAL_L17"/>
    <property type="match status" value="1"/>
</dbReference>
<reference key="1">
    <citation type="journal article" date="2004" name="Nucleic Acids Res.">
        <title>Genome sequence of Symbiobacterium thermophilum, an uncultivable bacterium that depends on microbial commensalism.</title>
        <authorList>
            <person name="Ueda K."/>
            <person name="Yamashita A."/>
            <person name="Ishikawa J."/>
            <person name="Shimada M."/>
            <person name="Watsuji T."/>
            <person name="Morimura K."/>
            <person name="Ikeda H."/>
            <person name="Hattori M."/>
            <person name="Beppu T."/>
        </authorList>
    </citation>
    <scope>NUCLEOTIDE SEQUENCE [LARGE SCALE GENOMIC DNA]</scope>
    <source>
        <strain>DSM 24528 / JCM 14929 / IAM 14863 / T</strain>
    </source>
</reference>
<comment type="subunit">
    <text evidence="1">Part of the 50S ribosomal subunit. Contacts protein L32.</text>
</comment>
<comment type="similarity">
    <text evidence="1">Belongs to the bacterial ribosomal protein bL17 family.</text>
</comment>
<proteinExistence type="inferred from homology"/>
<feature type="chain" id="PRO_0000267952" description="Large ribosomal subunit protein bL17">
    <location>
        <begin position="1"/>
        <end position="113"/>
    </location>
</feature>
<organism>
    <name type="scientific">Symbiobacterium thermophilum (strain DSM 24528 / JCM 14929 / IAM 14863 / T)</name>
    <dbReference type="NCBI Taxonomy" id="292459"/>
    <lineage>
        <taxon>Bacteria</taxon>
        <taxon>Bacillati</taxon>
        <taxon>Bacillota</taxon>
        <taxon>Clostridia</taxon>
        <taxon>Eubacteriales</taxon>
        <taxon>Symbiobacteriaceae</taxon>
        <taxon>Symbiobacterium</taxon>
    </lineage>
</organism>
<name>RL17_SYMTH</name>
<accession>Q67JX2</accession>
<gene>
    <name evidence="1" type="primary">rplQ</name>
    <name type="ordered locus">STH3046</name>
</gene>
<evidence type="ECO:0000255" key="1">
    <source>
        <dbReference type="HAMAP-Rule" id="MF_01368"/>
    </source>
</evidence>
<evidence type="ECO:0000305" key="2"/>